<organism>
    <name type="scientific">Tolumonas auensis (strain DSM 9187 / NBRC 110442 / TA 4)</name>
    <dbReference type="NCBI Taxonomy" id="595494"/>
    <lineage>
        <taxon>Bacteria</taxon>
        <taxon>Pseudomonadati</taxon>
        <taxon>Pseudomonadota</taxon>
        <taxon>Gammaproteobacteria</taxon>
        <taxon>Aeromonadales</taxon>
        <taxon>Aeromonadaceae</taxon>
        <taxon>Tolumonas</taxon>
    </lineage>
</organism>
<comment type="function">
    <text evidence="1">Participates actively in the response to hyperosmotic and heat shock by preventing the aggregation of stress-denatured proteins and by disaggregating proteins, also in an autonomous, DnaK-independent fashion. Unfolded proteins bind initially to DnaJ; upon interaction with the DnaJ-bound protein, DnaK hydrolyzes its bound ATP, resulting in the formation of a stable complex. GrpE releases ADP from DnaK; ATP binding to DnaK triggers the release of the substrate protein, thus completing the reaction cycle. Several rounds of ATP-dependent interactions between DnaJ, DnaK and GrpE are required for fully efficient folding. Also involved, together with DnaK and GrpE, in the DNA replication of plasmids through activation of initiation proteins.</text>
</comment>
<comment type="cofactor">
    <cofactor evidence="1">
        <name>Zn(2+)</name>
        <dbReference type="ChEBI" id="CHEBI:29105"/>
    </cofactor>
    <text evidence="1">Binds 2 Zn(2+) ions per monomer.</text>
</comment>
<comment type="subunit">
    <text evidence="1">Homodimer.</text>
</comment>
<comment type="subcellular location">
    <subcellularLocation>
        <location evidence="1">Cytoplasm</location>
    </subcellularLocation>
</comment>
<comment type="domain">
    <text evidence="1">The J domain is necessary and sufficient to stimulate DnaK ATPase activity. Zinc center 1 plays an important role in the autonomous, DnaK-independent chaperone activity of DnaJ. Zinc center 2 is essential for interaction with DnaK and for DnaJ activity.</text>
</comment>
<comment type="similarity">
    <text evidence="1">Belongs to the DnaJ family.</text>
</comment>
<proteinExistence type="inferred from homology"/>
<reference key="1">
    <citation type="submission" date="2009-05" db="EMBL/GenBank/DDBJ databases">
        <title>Complete sequence of Tolumonas auensis DSM 9187.</title>
        <authorList>
            <consortium name="US DOE Joint Genome Institute"/>
            <person name="Lucas S."/>
            <person name="Copeland A."/>
            <person name="Lapidus A."/>
            <person name="Glavina del Rio T."/>
            <person name="Tice H."/>
            <person name="Bruce D."/>
            <person name="Goodwin L."/>
            <person name="Pitluck S."/>
            <person name="Chertkov O."/>
            <person name="Brettin T."/>
            <person name="Detter J.C."/>
            <person name="Han C."/>
            <person name="Larimer F."/>
            <person name="Land M."/>
            <person name="Hauser L."/>
            <person name="Kyrpides N."/>
            <person name="Mikhailova N."/>
            <person name="Spring S."/>
            <person name="Beller H."/>
        </authorList>
    </citation>
    <scope>NUCLEOTIDE SEQUENCE [LARGE SCALE GENOMIC DNA]</scope>
    <source>
        <strain>DSM 9187 / NBRC 110442 / TA 4</strain>
    </source>
</reference>
<protein>
    <recommendedName>
        <fullName evidence="1">Chaperone protein DnaJ</fullName>
    </recommendedName>
</protein>
<accession>C4L8Y4</accession>
<dbReference type="EMBL" id="CP001616">
    <property type="protein sequence ID" value="ACQ93854.1"/>
    <property type="molecule type" value="Genomic_DNA"/>
</dbReference>
<dbReference type="RefSeq" id="WP_015879322.1">
    <property type="nucleotide sequence ID" value="NC_012691.1"/>
</dbReference>
<dbReference type="SMR" id="C4L8Y4"/>
<dbReference type="STRING" id="595494.Tola_2256"/>
<dbReference type="KEGG" id="tau:Tola_2256"/>
<dbReference type="eggNOG" id="COG0484">
    <property type="taxonomic scope" value="Bacteria"/>
</dbReference>
<dbReference type="HOGENOM" id="CLU_017633_0_7_6"/>
<dbReference type="OrthoDB" id="9779889at2"/>
<dbReference type="Proteomes" id="UP000009073">
    <property type="component" value="Chromosome"/>
</dbReference>
<dbReference type="GO" id="GO:0005737">
    <property type="term" value="C:cytoplasm"/>
    <property type="evidence" value="ECO:0007669"/>
    <property type="project" value="UniProtKB-SubCell"/>
</dbReference>
<dbReference type="GO" id="GO:0005524">
    <property type="term" value="F:ATP binding"/>
    <property type="evidence" value="ECO:0007669"/>
    <property type="project" value="InterPro"/>
</dbReference>
<dbReference type="GO" id="GO:0031072">
    <property type="term" value="F:heat shock protein binding"/>
    <property type="evidence" value="ECO:0007669"/>
    <property type="project" value="InterPro"/>
</dbReference>
<dbReference type="GO" id="GO:0051082">
    <property type="term" value="F:unfolded protein binding"/>
    <property type="evidence" value="ECO:0007669"/>
    <property type="project" value="UniProtKB-UniRule"/>
</dbReference>
<dbReference type="GO" id="GO:0008270">
    <property type="term" value="F:zinc ion binding"/>
    <property type="evidence" value="ECO:0007669"/>
    <property type="project" value="UniProtKB-UniRule"/>
</dbReference>
<dbReference type="GO" id="GO:0051085">
    <property type="term" value="P:chaperone cofactor-dependent protein refolding"/>
    <property type="evidence" value="ECO:0007669"/>
    <property type="project" value="TreeGrafter"/>
</dbReference>
<dbReference type="GO" id="GO:0006260">
    <property type="term" value="P:DNA replication"/>
    <property type="evidence" value="ECO:0007669"/>
    <property type="project" value="UniProtKB-KW"/>
</dbReference>
<dbReference type="GO" id="GO:0042026">
    <property type="term" value="P:protein refolding"/>
    <property type="evidence" value="ECO:0007669"/>
    <property type="project" value="TreeGrafter"/>
</dbReference>
<dbReference type="GO" id="GO:0009408">
    <property type="term" value="P:response to heat"/>
    <property type="evidence" value="ECO:0007669"/>
    <property type="project" value="InterPro"/>
</dbReference>
<dbReference type="CDD" id="cd06257">
    <property type="entry name" value="DnaJ"/>
    <property type="match status" value="1"/>
</dbReference>
<dbReference type="CDD" id="cd10747">
    <property type="entry name" value="DnaJ_C"/>
    <property type="match status" value="1"/>
</dbReference>
<dbReference type="CDD" id="cd10719">
    <property type="entry name" value="DnaJ_zf"/>
    <property type="match status" value="1"/>
</dbReference>
<dbReference type="FunFam" id="1.10.287.110:FF:000034">
    <property type="entry name" value="Chaperone protein DnaJ"/>
    <property type="match status" value="1"/>
</dbReference>
<dbReference type="FunFam" id="2.10.230.10:FF:000002">
    <property type="entry name" value="Molecular chaperone DnaJ"/>
    <property type="match status" value="1"/>
</dbReference>
<dbReference type="FunFam" id="2.60.260.20:FF:000004">
    <property type="entry name" value="Molecular chaperone DnaJ"/>
    <property type="match status" value="1"/>
</dbReference>
<dbReference type="Gene3D" id="1.10.287.110">
    <property type="entry name" value="DnaJ domain"/>
    <property type="match status" value="1"/>
</dbReference>
<dbReference type="Gene3D" id="2.10.230.10">
    <property type="entry name" value="Heat shock protein DnaJ, cysteine-rich domain"/>
    <property type="match status" value="1"/>
</dbReference>
<dbReference type="Gene3D" id="2.60.260.20">
    <property type="entry name" value="Urease metallochaperone UreE, N-terminal domain"/>
    <property type="match status" value="2"/>
</dbReference>
<dbReference type="HAMAP" id="MF_01152">
    <property type="entry name" value="DnaJ"/>
    <property type="match status" value="1"/>
</dbReference>
<dbReference type="InterPro" id="IPR012724">
    <property type="entry name" value="DnaJ"/>
</dbReference>
<dbReference type="InterPro" id="IPR002939">
    <property type="entry name" value="DnaJ_C"/>
</dbReference>
<dbReference type="InterPro" id="IPR001623">
    <property type="entry name" value="DnaJ_domain"/>
</dbReference>
<dbReference type="InterPro" id="IPR018253">
    <property type="entry name" value="DnaJ_domain_CS"/>
</dbReference>
<dbReference type="InterPro" id="IPR008971">
    <property type="entry name" value="HSP40/DnaJ_pept-bd"/>
</dbReference>
<dbReference type="InterPro" id="IPR001305">
    <property type="entry name" value="HSP_DnaJ_Cys-rich_dom"/>
</dbReference>
<dbReference type="InterPro" id="IPR036410">
    <property type="entry name" value="HSP_DnaJ_Cys-rich_dom_sf"/>
</dbReference>
<dbReference type="InterPro" id="IPR036869">
    <property type="entry name" value="J_dom_sf"/>
</dbReference>
<dbReference type="NCBIfam" id="TIGR02349">
    <property type="entry name" value="DnaJ_bact"/>
    <property type="match status" value="1"/>
</dbReference>
<dbReference type="NCBIfam" id="NF008035">
    <property type="entry name" value="PRK10767.1"/>
    <property type="match status" value="1"/>
</dbReference>
<dbReference type="PANTHER" id="PTHR43096:SF48">
    <property type="entry name" value="CHAPERONE PROTEIN DNAJ"/>
    <property type="match status" value="1"/>
</dbReference>
<dbReference type="PANTHER" id="PTHR43096">
    <property type="entry name" value="DNAJ HOMOLOG 1, MITOCHONDRIAL-RELATED"/>
    <property type="match status" value="1"/>
</dbReference>
<dbReference type="Pfam" id="PF00226">
    <property type="entry name" value="DnaJ"/>
    <property type="match status" value="1"/>
</dbReference>
<dbReference type="Pfam" id="PF01556">
    <property type="entry name" value="DnaJ_C"/>
    <property type="match status" value="1"/>
</dbReference>
<dbReference type="Pfam" id="PF00684">
    <property type="entry name" value="DnaJ_CXXCXGXG"/>
    <property type="match status" value="1"/>
</dbReference>
<dbReference type="PRINTS" id="PR00625">
    <property type="entry name" value="JDOMAIN"/>
</dbReference>
<dbReference type="SMART" id="SM00271">
    <property type="entry name" value="DnaJ"/>
    <property type="match status" value="1"/>
</dbReference>
<dbReference type="SUPFAM" id="SSF46565">
    <property type="entry name" value="Chaperone J-domain"/>
    <property type="match status" value="1"/>
</dbReference>
<dbReference type="SUPFAM" id="SSF57938">
    <property type="entry name" value="DnaJ/Hsp40 cysteine-rich domain"/>
    <property type="match status" value="1"/>
</dbReference>
<dbReference type="SUPFAM" id="SSF49493">
    <property type="entry name" value="HSP40/DnaJ peptide-binding domain"/>
    <property type="match status" value="2"/>
</dbReference>
<dbReference type="PROSITE" id="PS00636">
    <property type="entry name" value="DNAJ_1"/>
    <property type="match status" value="1"/>
</dbReference>
<dbReference type="PROSITE" id="PS50076">
    <property type="entry name" value="DNAJ_2"/>
    <property type="match status" value="1"/>
</dbReference>
<dbReference type="PROSITE" id="PS51188">
    <property type="entry name" value="ZF_CR"/>
    <property type="match status" value="1"/>
</dbReference>
<gene>
    <name evidence="1" type="primary">dnaJ</name>
    <name type="ordered locus">Tola_2256</name>
</gene>
<evidence type="ECO:0000255" key="1">
    <source>
        <dbReference type="HAMAP-Rule" id="MF_01152"/>
    </source>
</evidence>
<name>DNAJ_TOLAT</name>
<sequence>MAKRDYYEILGVERSADEREIKKAYKRLAMKFHPDRNPDNPESEEKFKEAKEAYEILSDAQKRAAYDKFGHAGVDPNQAGPGGFGGGADFGDVFGDIFGDIFGGGRRSQRAARGSDLRYNMELTLEEAVRGVSKEIKVPTLVECDECHGSGARTGTSAQTCPTCHGSGQVQMRQGFFAVTQACPHCHGKGKIITDPCRKCHGDGRVQKTKTLSVKIPAGVDTGDRIRLAGEGEAGEFGAPAGDLYVQVHVKEHPIFVRDGNNLYCEIPISFTTAALGGEVAVPTLDGRVMLKIPVETQTGRMFRLRGKGVRSLRSGAEGDLLCKAVVETPVKLSDEQKELLKQLEDSLNGSGVKTHKPKADGFFEGVKRFFDDLTG</sequence>
<keyword id="KW-0143">Chaperone</keyword>
<keyword id="KW-0963">Cytoplasm</keyword>
<keyword id="KW-0235">DNA replication</keyword>
<keyword id="KW-0479">Metal-binding</keyword>
<keyword id="KW-1185">Reference proteome</keyword>
<keyword id="KW-0677">Repeat</keyword>
<keyword id="KW-0346">Stress response</keyword>
<keyword id="KW-0862">Zinc</keyword>
<keyword id="KW-0863">Zinc-finger</keyword>
<feature type="chain" id="PRO_1000213693" description="Chaperone protein DnaJ">
    <location>
        <begin position="1"/>
        <end position="376"/>
    </location>
</feature>
<feature type="domain" description="J" evidence="1">
    <location>
        <begin position="5"/>
        <end position="70"/>
    </location>
</feature>
<feature type="repeat" description="CXXCXGXG motif">
    <location>
        <begin position="144"/>
        <end position="151"/>
    </location>
</feature>
<feature type="repeat" description="CXXCXGXG motif">
    <location>
        <begin position="161"/>
        <end position="168"/>
    </location>
</feature>
<feature type="repeat" description="CXXCXGXG motif">
    <location>
        <begin position="183"/>
        <end position="190"/>
    </location>
</feature>
<feature type="repeat" description="CXXCXGXG motif">
    <location>
        <begin position="197"/>
        <end position="204"/>
    </location>
</feature>
<feature type="zinc finger region" description="CR-type" evidence="1">
    <location>
        <begin position="131"/>
        <end position="209"/>
    </location>
</feature>
<feature type="binding site" evidence="1">
    <location>
        <position position="144"/>
    </location>
    <ligand>
        <name>Zn(2+)</name>
        <dbReference type="ChEBI" id="CHEBI:29105"/>
        <label>1</label>
    </ligand>
</feature>
<feature type="binding site" evidence="1">
    <location>
        <position position="147"/>
    </location>
    <ligand>
        <name>Zn(2+)</name>
        <dbReference type="ChEBI" id="CHEBI:29105"/>
        <label>1</label>
    </ligand>
</feature>
<feature type="binding site" evidence="1">
    <location>
        <position position="161"/>
    </location>
    <ligand>
        <name>Zn(2+)</name>
        <dbReference type="ChEBI" id="CHEBI:29105"/>
        <label>2</label>
    </ligand>
</feature>
<feature type="binding site" evidence="1">
    <location>
        <position position="164"/>
    </location>
    <ligand>
        <name>Zn(2+)</name>
        <dbReference type="ChEBI" id="CHEBI:29105"/>
        <label>2</label>
    </ligand>
</feature>
<feature type="binding site" evidence="1">
    <location>
        <position position="183"/>
    </location>
    <ligand>
        <name>Zn(2+)</name>
        <dbReference type="ChEBI" id="CHEBI:29105"/>
        <label>2</label>
    </ligand>
</feature>
<feature type="binding site" evidence="1">
    <location>
        <position position="186"/>
    </location>
    <ligand>
        <name>Zn(2+)</name>
        <dbReference type="ChEBI" id="CHEBI:29105"/>
        <label>2</label>
    </ligand>
</feature>
<feature type="binding site" evidence="1">
    <location>
        <position position="197"/>
    </location>
    <ligand>
        <name>Zn(2+)</name>
        <dbReference type="ChEBI" id="CHEBI:29105"/>
        <label>1</label>
    </ligand>
</feature>
<feature type="binding site" evidence="1">
    <location>
        <position position="200"/>
    </location>
    <ligand>
        <name>Zn(2+)</name>
        <dbReference type="ChEBI" id="CHEBI:29105"/>
        <label>1</label>
    </ligand>
</feature>